<organism>
    <name type="scientific">Klebsiella aerogenes</name>
    <name type="common">Enterobacter aerogenes</name>
    <dbReference type="NCBI Taxonomy" id="548"/>
    <lineage>
        <taxon>Bacteria</taxon>
        <taxon>Pseudomonadati</taxon>
        <taxon>Pseudomonadota</taxon>
        <taxon>Gammaproteobacteria</taxon>
        <taxon>Enterobacterales</taxon>
        <taxon>Enterobacteriaceae</taxon>
        <taxon>Klebsiella/Raoultella group</taxon>
        <taxon>Klebsiella</taxon>
    </lineage>
</organism>
<sequence length="260" mass="29032">MMMHSSACDCEASLCETLRGFSAKHPDSVIYQTSLMSALLSGVYEGDTTIADLLAHGDFGLGTFNELDGEMIAFSSQVYQLRADGSARAAKPEQKTPFAVMTWFQPQYRKTFDAPVSRQQIHDVIDQQIPSDNLFCALRIDGNFRHAHTRTVPRQTPPYRAMTDVLDDQPVFRFNQREGVLVGFRTPQHMQGINVAGYHEHFITDDRQGGGHLLDYQLESGVLTFGEIHKLMIDLPADSAFLQANLHPSNLDAAIRSVEN</sequence>
<keyword id="KW-0002">3D-structure</keyword>
<keyword id="KW-0005">Acetoin biosynthesis</keyword>
<keyword id="KW-0210">Decarboxylase</keyword>
<keyword id="KW-0456">Lyase</keyword>
<comment type="function">
    <text>Converts acetolactate into acetoin, which can be excreted by the cells. This may be a mechanism for controlling the internal pH of cells in the stationary stage.</text>
</comment>
<comment type="catalytic activity">
    <reaction>
        <text>(2S)-2-acetolactate + H(+) = (R)-acetoin + CO2</text>
        <dbReference type="Rhea" id="RHEA:21580"/>
        <dbReference type="ChEBI" id="CHEBI:15378"/>
        <dbReference type="ChEBI" id="CHEBI:15686"/>
        <dbReference type="ChEBI" id="CHEBI:16526"/>
        <dbReference type="ChEBI" id="CHEBI:58476"/>
        <dbReference type="EC" id="4.1.1.5"/>
    </reaction>
</comment>
<comment type="pathway">
    <text>Polyol metabolism; (R,R)-butane-2,3-diol biosynthesis; (R,R)-butane-2,3-diol from pyruvate: step 2/3.</text>
</comment>
<comment type="similarity">
    <text evidence="1">Belongs to the alpha-acetolactate decarboxylase family.</text>
</comment>
<name>ALDC_KLEAE</name>
<accession>P05361</accession>
<accession>Q59340</accession>
<evidence type="ECO:0000305" key="1"/>
<evidence type="ECO:0007829" key="2">
    <source>
        <dbReference type="PDB" id="5YHO"/>
    </source>
</evidence>
<evidence type="ECO:0007829" key="3">
    <source>
        <dbReference type="PDB" id="6J92"/>
    </source>
</evidence>
<reference key="1">
    <citation type="journal article" date="1988" name="Appl. Environ. Microbiol.">
        <title>Nucleotide sequence and expression of the Enterobacter aerogenes alpha-acetolactate decarboxylase gene in brewer's yeast.</title>
        <authorList>
            <person name="Sone H."/>
            <person name="Fujii T."/>
            <person name="Kondo K."/>
            <person name="Shimizu F."/>
            <person name="Tanaka J."/>
            <person name="Inoue T."/>
        </authorList>
    </citation>
    <scope>NUCLEOTIDE SEQUENCE [GENOMIC DNA]</scope>
</reference>
<reference key="2">
    <citation type="journal article" date="1993" name="J. Bacteriol.">
        <title>Characterization of the genes of the 2,3-butanediol operons from Klebsiella terrigena and Enterobacter aerogenes.</title>
        <authorList>
            <person name="Blomqvist K."/>
            <person name="Nikkola M."/>
            <person name="Lehtovaara P."/>
            <person name="Suihko M.-L."/>
            <person name="Airaksinen U."/>
            <person name="Straby K.B."/>
            <person name="Knowles J.K.C."/>
            <person name="Penttilae M.E."/>
        </authorList>
    </citation>
    <scope>NUCLEOTIDE SEQUENCE [GENOMIC DNA]</scope>
</reference>
<dbReference type="EC" id="4.1.1.5"/>
<dbReference type="EMBL" id="J03433">
    <property type="protein sequence ID" value="AAA24794.1"/>
    <property type="molecule type" value="Genomic_DNA"/>
</dbReference>
<dbReference type="EMBL" id="L04506">
    <property type="protein sequence ID" value="AAA56801.1"/>
    <property type="molecule type" value="Genomic_DNA"/>
</dbReference>
<dbReference type="PIR" id="A32515">
    <property type="entry name" value="A32515"/>
</dbReference>
<dbReference type="PDB" id="5YHO">
    <property type="method" value="X-ray"/>
    <property type="resolution" value="2.40 A"/>
    <property type="chains" value="A/B=23-260"/>
</dbReference>
<dbReference type="PDB" id="6J92">
    <property type="method" value="X-ray"/>
    <property type="resolution" value="2.42 A"/>
    <property type="chains" value="A/B=23-260"/>
</dbReference>
<dbReference type="PDBsum" id="5YHO"/>
<dbReference type="PDBsum" id="6J92"/>
<dbReference type="SMR" id="P05361"/>
<dbReference type="STRING" id="548.EAG7_01916"/>
<dbReference type="BioCyc" id="MetaCyc:MONOMER-17721"/>
<dbReference type="UniPathway" id="UPA00626">
    <property type="reaction ID" value="UER00678"/>
</dbReference>
<dbReference type="GO" id="GO:0047605">
    <property type="term" value="F:acetolactate decarboxylase activity"/>
    <property type="evidence" value="ECO:0007669"/>
    <property type="project" value="UniProtKB-EC"/>
</dbReference>
<dbReference type="GO" id="GO:0045151">
    <property type="term" value="P:acetoin biosynthetic process"/>
    <property type="evidence" value="ECO:0007669"/>
    <property type="project" value="UniProtKB-KW"/>
</dbReference>
<dbReference type="CDD" id="cd17299">
    <property type="entry name" value="acetolactate_decarboxylase"/>
    <property type="match status" value="1"/>
</dbReference>
<dbReference type="Gene3D" id="3.30.1330.80">
    <property type="entry name" value="Hypothetical protein, similar to alpha- acetolactate decarboxylase, domain 2"/>
    <property type="match status" value="2"/>
</dbReference>
<dbReference type="InterPro" id="IPR005128">
    <property type="entry name" value="Acetolactate_a_deCO2ase"/>
</dbReference>
<dbReference type="NCBIfam" id="TIGR01252">
    <property type="entry name" value="acetolac_decarb"/>
    <property type="match status" value="1"/>
</dbReference>
<dbReference type="PANTHER" id="PTHR35524">
    <property type="entry name" value="ALPHA-ACETOLACTATE DECARBOXYLASE"/>
    <property type="match status" value="1"/>
</dbReference>
<dbReference type="PANTHER" id="PTHR35524:SF1">
    <property type="entry name" value="ALPHA-ACETOLACTATE DECARBOXYLASE"/>
    <property type="match status" value="1"/>
</dbReference>
<dbReference type="Pfam" id="PF03306">
    <property type="entry name" value="AAL_decarboxy"/>
    <property type="match status" value="1"/>
</dbReference>
<dbReference type="PIRSF" id="PIRSF001332">
    <property type="entry name" value="Acetolac_decarb"/>
    <property type="match status" value="1"/>
</dbReference>
<dbReference type="SUPFAM" id="SSF117856">
    <property type="entry name" value="AF0104/ALDC/Ptd012-like"/>
    <property type="match status" value="1"/>
</dbReference>
<feature type="chain" id="PRO_0000218439" description="Alpha-acetolactate decarboxylase">
    <location>
        <begin position="1"/>
        <end position="260"/>
    </location>
</feature>
<feature type="sequence conflict" description="In Ref. 2; AAA56801." evidence="1" ref="2">
    <original>K</original>
    <variation>Q</variation>
    <location>
        <position position="24"/>
    </location>
</feature>
<feature type="sequence conflict" description="In Ref. 2; AAA56801." evidence="1" ref="2">
    <original>EGD</original>
    <variation>VGE</variation>
    <location>
        <begin position="45"/>
        <end position="47"/>
    </location>
</feature>
<feature type="sequence conflict" description="In Ref. 2; AAA56801." evidence="1" ref="2">
    <original>DA</original>
    <variation>NG</variation>
    <location>
        <begin position="113"/>
        <end position="114"/>
    </location>
</feature>
<feature type="sequence conflict" description="In Ref. 2; AAA56801." evidence="1" ref="2">
    <original>AL</original>
    <variation>V</variation>
    <location>
        <begin position="137"/>
        <end position="138"/>
    </location>
</feature>
<feature type="sequence conflict" description="In Ref. 2; AAA56801." evidence="1" ref="2">
    <original>S</original>
    <variation>A</variation>
    <location>
        <position position="257"/>
    </location>
</feature>
<feature type="strand" evidence="2">
    <location>
        <begin position="30"/>
        <end position="34"/>
    </location>
</feature>
<feature type="helix" evidence="2">
    <location>
        <begin position="36"/>
        <end position="41"/>
    </location>
</feature>
<feature type="helix" evidence="2">
    <location>
        <begin position="50"/>
        <end position="54"/>
    </location>
</feature>
<feature type="strand" evidence="2">
    <location>
        <begin position="58"/>
        <end position="63"/>
    </location>
</feature>
<feature type="helix" evidence="2">
    <location>
        <begin position="65"/>
        <end position="67"/>
    </location>
</feature>
<feature type="strand" evidence="2">
    <location>
        <begin position="69"/>
        <end position="74"/>
    </location>
</feature>
<feature type="strand" evidence="2">
    <location>
        <begin position="77"/>
        <end position="81"/>
    </location>
</feature>
<feature type="strand" evidence="2">
    <location>
        <begin position="83"/>
        <end position="85"/>
    </location>
</feature>
<feature type="strand" evidence="3">
    <location>
        <begin position="87"/>
        <end position="89"/>
    </location>
</feature>
<feature type="strand" evidence="2">
    <location>
        <begin position="95"/>
        <end position="101"/>
    </location>
</feature>
<feature type="strand" evidence="2">
    <location>
        <begin position="107"/>
        <end position="114"/>
    </location>
</feature>
<feature type="helix" evidence="2">
    <location>
        <begin position="118"/>
        <end position="128"/>
    </location>
</feature>
<feature type="strand" evidence="2">
    <location>
        <begin position="134"/>
        <end position="149"/>
    </location>
</feature>
<feature type="helix" evidence="3">
    <location>
        <begin position="162"/>
        <end position="164"/>
    </location>
</feature>
<feature type="strand" evidence="2">
    <location>
        <begin position="172"/>
        <end position="186"/>
    </location>
</feature>
<feature type="helix" evidence="2">
    <location>
        <begin position="188"/>
        <end position="190"/>
    </location>
</feature>
<feature type="turn" evidence="3">
    <location>
        <begin position="191"/>
        <end position="193"/>
    </location>
</feature>
<feature type="strand" evidence="2">
    <location>
        <begin position="197"/>
        <end position="204"/>
    </location>
</feature>
<feature type="strand" evidence="2">
    <location>
        <begin position="210"/>
        <end position="228"/>
    </location>
</feature>
<feature type="strand" evidence="2">
    <location>
        <begin position="230"/>
        <end position="234"/>
    </location>
</feature>
<feature type="helix" evidence="2">
    <location>
        <begin position="239"/>
        <end position="242"/>
    </location>
</feature>
<feature type="helix" evidence="2">
    <location>
        <begin position="251"/>
        <end position="259"/>
    </location>
</feature>
<protein>
    <recommendedName>
        <fullName>Alpha-acetolactate decarboxylase</fullName>
        <ecNumber>4.1.1.5</ecNumber>
    </recommendedName>
</protein>
<proteinExistence type="evidence at protein level"/>
<gene>
    <name type="primary">budA</name>
    <name type="synonym">aldC</name>
</gene>